<keyword id="KW-0012">Acyltransferase</keyword>
<keyword id="KW-0028">Amino-acid biosynthesis</keyword>
<keyword id="KW-0220">Diaminopimelate biosynthesis</keyword>
<keyword id="KW-0457">Lysine biosynthesis</keyword>
<keyword id="KW-0677">Repeat</keyword>
<keyword id="KW-0808">Transferase</keyword>
<sequence length="240" mass="25632">MKMMDANEIISFIQKSEKKTPVKVYIKGDLKEVTFPETVQAFVNKKSGVLFGEWSEIKTILDGNSKYIVDYVVENDRRNSAIPMLDLKGIKARIEPGAIIRDHVEIGDNAVIMMNATINIGAVIGEGSMIDMNAVLGGRATVGKNCHVGAGAVLAGVIEPPSAKPVIVEDDVVIGANVVVLEGVTVGKGAVVAAGAVVTEDVPPYTVVAGTPARVIKEIDEKTKAKTEIKQELRQLNPEK</sequence>
<organism>
    <name type="scientific">Bacillus thuringiensis (strain Al Hakam)</name>
    <dbReference type="NCBI Taxonomy" id="412694"/>
    <lineage>
        <taxon>Bacteria</taxon>
        <taxon>Bacillati</taxon>
        <taxon>Bacillota</taxon>
        <taxon>Bacilli</taxon>
        <taxon>Bacillales</taxon>
        <taxon>Bacillaceae</taxon>
        <taxon>Bacillus</taxon>
        <taxon>Bacillus cereus group</taxon>
    </lineage>
</organism>
<name>DAPH_BACAH</name>
<protein>
    <recommendedName>
        <fullName evidence="1">2,3,4,5-tetrahydropyridine-2,6-dicarboxylate N-acetyltransferase</fullName>
        <ecNumber evidence="1">2.3.1.89</ecNumber>
    </recommendedName>
    <alternativeName>
        <fullName evidence="1">Tetrahydrodipicolinate N-acetyltransferase</fullName>
        <shortName evidence="1">THP acetyltransferase</shortName>
        <shortName evidence="1">Tetrahydropicolinate acetylase</shortName>
    </alternativeName>
</protein>
<reference key="1">
    <citation type="journal article" date="2007" name="J. Bacteriol.">
        <title>The complete genome sequence of Bacillus thuringiensis Al Hakam.</title>
        <authorList>
            <person name="Challacombe J.F."/>
            <person name="Altherr M.R."/>
            <person name="Xie G."/>
            <person name="Bhotika S.S."/>
            <person name="Brown N."/>
            <person name="Bruce D."/>
            <person name="Campbell C.S."/>
            <person name="Campbell M.L."/>
            <person name="Chen J."/>
            <person name="Chertkov O."/>
            <person name="Cleland C."/>
            <person name="Dimitrijevic M."/>
            <person name="Doggett N.A."/>
            <person name="Fawcett J.J."/>
            <person name="Glavina T."/>
            <person name="Goodwin L.A."/>
            <person name="Green L.D."/>
            <person name="Han C.S."/>
            <person name="Hill K.K."/>
            <person name="Hitchcock P."/>
            <person name="Jackson P.J."/>
            <person name="Keim P."/>
            <person name="Kewalramani A.R."/>
            <person name="Longmire J."/>
            <person name="Lucas S."/>
            <person name="Malfatti S."/>
            <person name="Martinez D."/>
            <person name="McMurry K."/>
            <person name="Meincke L.J."/>
            <person name="Misra M."/>
            <person name="Moseman B.L."/>
            <person name="Mundt M."/>
            <person name="Munk A.C."/>
            <person name="Okinaka R.T."/>
            <person name="Parson-Quintana B."/>
            <person name="Reilly L.P."/>
            <person name="Richardson P."/>
            <person name="Robinson D.L."/>
            <person name="Saunders E."/>
            <person name="Tapia R."/>
            <person name="Tesmer J.G."/>
            <person name="Thayer N."/>
            <person name="Thompson L.S."/>
            <person name="Tice H."/>
            <person name="Ticknor L.O."/>
            <person name="Wills P.L."/>
            <person name="Gilna P."/>
            <person name="Brettin T.S."/>
        </authorList>
    </citation>
    <scope>NUCLEOTIDE SEQUENCE [LARGE SCALE GENOMIC DNA]</scope>
    <source>
        <strain>Al Hakam</strain>
    </source>
</reference>
<accession>A0RHZ3</accession>
<dbReference type="EC" id="2.3.1.89" evidence="1"/>
<dbReference type="EMBL" id="CP000485">
    <property type="protein sequence ID" value="ABK86836.1"/>
    <property type="molecule type" value="Genomic_DNA"/>
</dbReference>
<dbReference type="SMR" id="A0RHZ3"/>
<dbReference type="KEGG" id="btl:BALH_3603"/>
<dbReference type="HOGENOM" id="CLU_103751_0_0_9"/>
<dbReference type="UniPathway" id="UPA00034">
    <property type="reaction ID" value="UER00022"/>
</dbReference>
<dbReference type="GO" id="GO:0047200">
    <property type="term" value="F:tetrahydrodipicolinate N-acetyltransferase activity"/>
    <property type="evidence" value="ECO:0007669"/>
    <property type="project" value="UniProtKB-EC"/>
</dbReference>
<dbReference type="GO" id="GO:0019877">
    <property type="term" value="P:diaminopimelate biosynthetic process"/>
    <property type="evidence" value="ECO:0007669"/>
    <property type="project" value="UniProtKB-UniRule"/>
</dbReference>
<dbReference type="GO" id="GO:0009089">
    <property type="term" value="P:lysine biosynthetic process via diaminopimelate"/>
    <property type="evidence" value="ECO:0007669"/>
    <property type="project" value="UniProtKB-UniRule"/>
</dbReference>
<dbReference type="CDD" id="cd03350">
    <property type="entry name" value="LbH_THP_succinylT"/>
    <property type="match status" value="1"/>
</dbReference>
<dbReference type="Gene3D" id="2.160.10.10">
    <property type="entry name" value="Hexapeptide repeat proteins"/>
    <property type="match status" value="1"/>
</dbReference>
<dbReference type="Gene3D" id="3.30.70.250">
    <property type="entry name" value="Malonyl-CoA ACP transacylase, ACP-binding"/>
    <property type="match status" value="1"/>
</dbReference>
<dbReference type="HAMAP" id="MF_01691">
    <property type="entry name" value="DapH"/>
    <property type="match status" value="1"/>
</dbReference>
<dbReference type="InterPro" id="IPR019873">
    <property type="entry name" value="DapH"/>
</dbReference>
<dbReference type="InterPro" id="IPR013710">
    <property type="entry name" value="DapH_N"/>
</dbReference>
<dbReference type="InterPro" id="IPR001451">
    <property type="entry name" value="Hexapep"/>
</dbReference>
<dbReference type="InterPro" id="IPR018357">
    <property type="entry name" value="Hexapep_transf_CS"/>
</dbReference>
<dbReference type="InterPro" id="IPR050179">
    <property type="entry name" value="Trans_hexapeptide_repeat"/>
</dbReference>
<dbReference type="InterPro" id="IPR011004">
    <property type="entry name" value="Trimer_LpxA-like_sf"/>
</dbReference>
<dbReference type="NCBIfam" id="TIGR03532">
    <property type="entry name" value="DapD_Ac"/>
    <property type="match status" value="1"/>
</dbReference>
<dbReference type="PANTHER" id="PTHR43300:SF10">
    <property type="entry name" value="2,3,4,5-TETRAHYDROPYRIDINE-2,6-DICARBOXYLATE N-ACETYLTRANSFERASE"/>
    <property type="match status" value="1"/>
</dbReference>
<dbReference type="PANTHER" id="PTHR43300">
    <property type="entry name" value="ACETYLTRANSFERASE"/>
    <property type="match status" value="1"/>
</dbReference>
<dbReference type="Pfam" id="PF08503">
    <property type="entry name" value="DapH_N"/>
    <property type="match status" value="1"/>
</dbReference>
<dbReference type="Pfam" id="PF00132">
    <property type="entry name" value="Hexapep"/>
    <property type="match status" value="1"/>
</dbReference>
<dbReference type="Pfam" id="PF14602">
    <property type="entry name" value="Hexapep_2"/>
    <property type="match status" value="1"/>
</dbReference>
<dbReference type="SUPFAM" id="SSF51161">
    <property type="entry name" value="Trimeric LpxA-like enzymes"/>
    <property type="match status" value="1"/>
</dbReference>
<dbReference type="PROSITE" id="PS00101">
    <property type="entry name" value="HEXAPEP_TRANSFERASES"/>
    <property type="match status" value="1"/>
</dbReference>
<comment type="function">
    <text evidence="1">Catalyzes the transfer of an acetyl group from acetyl-CoA to tetrahydrodipicolinate.</text>
</comment>
<comment type="catalytic activity">
    <reaction evidence="1">
        <text>(S)-2,3,4,5-tetrahydrodipicolinate + acetyl-CoA + H2O = L-2-acetamido-6-oxoheptanedioate + CoA</text>
        <dbReference type="Rhea" id="RHEA:13085"/>
        <dbReference type="ChEBI" id="CHEBI:15377"/>
        <dbReference type="ChEBI" id="CHEBI:16845"/>
        <dbReference type="ChEBI" id="CHEBI:57287"/>
        <dbReference type="ChEBI" id="CHEBI:57288"/>
        <dbReference type="ChEBI" id="CHEBI:58117"/>
        <dbReference type="EC" id="2.3.1.89"/>
    </reaction>
</comment>
<comment type="pathway">
    <text evidence="1">Amino-acid biosynthesis; L-lysine biosynthesis via DAP pathway; LL-2,6-diaminopimelate from (S)-tetrahydrodipicolinate (acetylase route): step 1/3.</text>
</comment>
<comment type="similarity">
    <text evidence="1">Belongs to the transferase hexapeptide repeat family. DapH subfamily.</text>
</comment>
<evidence type="ECO:0000255" key="1">
    <source>
        <dbReference type="HAMAP-Rule" id="MF_01691"/>
    </source>
</evidence>
<proteinExistence type="inferred from homology"/>
<feature type="chain" id="PRO_0000376639" description="2,3,4,5-tetrahydropyridine-2,6-dicarboxylate N-acetyltransferase">
    <location>
        <begin position="1"/>
        <end position="240"/>
    </location>
</feature>
<gene>
    <name evidence="1" type="primary">dapH</name>
    <name type="ordered locus">BALH_3603</name>
</gene>